<proteinExistence type="inferred from homology"/>
<feature type="chain" id="PRO_0000286284" description="Spermidine/putrescine import ATP-binding protein PotA">
    <location>
        <begin position="1"/>
        <end position="378"/>
    </location>
</feature>
<feature type="domain" description="ABC transporter" evidence="1">
    <location>
        <begin position="18"/>
        <end position="248"/>
    </location>
</feature>
<feature type="binding site" evidence="1">
    <location>
        <begin position="50"/>
        <end position="57"/>
    </location>
    <ligand>
        <name>ATP</name>
        <dbReference type="ChEBI" id="CHEBI:30616"/>
    </ligand>
</feature>
<evidence type="ECO:0000255" key="1">
    <source>
        <dbReference type="HAMAP-Rule" id="MF_01726"/>
    </source>
</evidence>
<keyword id="KW-0067">ATP-binding</keyword>
<keyword id="KW-0997">Cell inner membrane</keyword>
<keyword id="KW-1003">Cell membrane</keyword>
<keyword id="KW-0472">Membrane</keyword>
<keyword id="KW-0547">Nucleotide-binding</keyword>
<keyword id="KW-1278">Translocase</keyword>
<keyword id="KW-0813">Transport</keyword>
<comment type="function">
    <text evidence="1">Part of the ABC transporter complex PotABCD involved in spermidine/putrescine import. Responsible for energy coupling to the transport system.</text>
</comment>
<comment type="catalytic activity">
    <reaction evidence="1">
        <text>ATP + H2O + polyamine-[polyamine-binding protein]Side 1 = ADP + phosphate + polyamineSide 2 + [polyamine-binding protein]Side 1.</text>
        <dbReference type="EC" id="7.6.2.11"/>
    </reaction>
</comment>
<comment type="subunit">
    <text evidence="1">The complex is composed of two ATP-binding proteins (PotA), two transmembrane proteins (PotB and PotC) and a solute-binding protein (PotD).</text>
</comment>
<comment type="subcellular location">
    <subcellularLocation>
        <location evidence="1">Cell inner membrane</location>
        <topology evidence="1">Peripheral membrane protein</topology>
    </subcellularLocation>
</comment>
<comment type="similarity">
    <text evidence="1">Belongs to the ABC transporter superfamily. Spermidine/putrescine importer (TC 3.A.1.11.1) family.</text>
</comment>
<protein>
    <recommendedName>
        <fullName evidence="1">Spermidine/putrescine import ATP-binding protein PotA</fullName>
        <ecNumber evidence="1">7.6.2.11</ecNumber>
    </recommendedName>
</protein>
<organism>
    <name type="scientific">Shigella boydii serotype 4 (strain Sb227)</name>
    <dbReference type="NCBI Taxonomy" id="300268"/>
    <lineage>
        <taxon>Bacteria</taxon>
        <taxon>Pseudomonadati</taxon>
        <taxon>Pseudomonadota</taxon>
        <taxon>Gammaproteobacteria</taxon>
        <taxon>Enterobacterales</taxon>
        <taxon>Enterobacteriaceae</taxon>
        <taxon>Shigella</taxon>
    </lineage>
</organism>
<accession>Q31ZK0</accession>
<gene>
    <name evidence="1" type="primary">potA</name>
    <name type="ordered locus">SBO_1915</name>
</gene>
<dbReference type="EC" id="7.6.2.11" evidence="1"/>
<dbReference type="EMBL" id="CP000036">
    <property type="protein sequence ID" value="ABB66508.1"/>
    <property type="molecule type" value="Genomic_DNA"/>
</dbReference>
<dbReference type="RefSeq" id="WP_000531601.1">
    <property type="nucleotide sequence ID" value="NC_007613.1"/>
</dbReference>
<dbReference type="SMR" id="Q31ZK0"/>
<dbReference type="GeneID" id="93776284"/>
<dbReference type="KEGG" id="sbo:SBO_1915"/>
<dbReference type="HOGENOM" id="CLU_000604_1_1_6"/>
<dbReference type="Proteomes" id="UP000007067">
    <property type="component" value="Chromosome"/>
</dbReference>
<dbReference type="GO" id="GO:0043190">
    <property type="term" value="C:ATP-binding cassette (ABC) transporter complex"/>
    <property type="evidence" value="ECO:0007669"/>
    <property type="project" value="InterPro"/>
</dbReference>
<dbReference type="GO" id="GO:0015594">
    <property type="term" value="F:ABC-type putrescine transporter activity"/>
    <property type="evidence" value="ECO:0007669"/>
    <property type="project" value="InterPro"/>
</dbReference>
<dbReference type="GO" id="GO:0005524">
    <property type="term" value="F:ATP binding"/>
    <property type="evidence" value="ECO:0007669"/>
    <property type="project" value="UniProtKB-KW"/>
</dbReference>
<dbReference type="GO" id="GO:0016887">
    <property type="term" value="F:ATP hydrolysis activity"/>
    <property type="evidence" value="ECO:0007669"/>
    <property type="project" value="InterPro"/>
</dbReference>
<dbReference type="CDD" id="cd03300">
    <property type="entry name" value="ABC_PotA_N"/>
    <property type="match status" value="1"/>
</dbReference>
<dbReference type="FunFam" id="2.40.50.100:FF:000017">
    <property type="entry name" value="Spermidine/putrescine import ATP-binding protein PotA"/>
    <property type="match status" value="1"/>
</dbReference>
<dbReference type="FunFam" id="3.40.50.300:FF:000133">
    <property type="entry name" value="Spermidine/putrescine import ATP-binding protein PotA"/>
    <property type="match status" value="1"/>
</dbReference>
<dbReference type="Gene3D" id="2.40.50.100">
    <property type="match status" value="1"/>
</dbReference>
<dbReference type="Gene3D" id="3.40.50.300">
    <property type="entry name" value="P-loop containing nucleotide triphosphate hydrolases"/>
    <property type="match status" value="1"/>
</dbReference>
<dbReference type="InterPro" id="IPR003593">
    <property type="entry name" value="AAA+_ATPase"/>
</dbReference>
<dbReference type="InterPro" id="IPR050093">
    <property type="entry name" value="ABC_SmlMolc_Importer"/>
</dbReference>
<dbReference type="InterPro" id="IPR003439">
    <property type="entry name" value="ABC_transporter-like_ATP-bd"/>
</dbReference>
<dbReference type="InterPro" id="IPR017871">
    <property type="entry name" value="ABC_transporter-like_CS"/>
</dbReference>
<dbReference type="InterPro" id="IPR008995">
    <property type="entry name" value="Mo/tungstate-bd_C_term_dom"/>
</dbReference>
<dbReference type="InterPro" id="IPR027417">
    <property type="entry name" value="P-loop_NTPase"/>
</dbReference>
<dbReference type="InterPro" id="IPR005893">
    <property type="entry name" value="PotA-like"/>
</dbReference>
<dbReference type="InterPro" id="IPR017879">
    <property type="entry name" value="PotA_ATP-bd"/>
</dbReference>
<dbReference type="InterPro" id="IPR013611">
    <property type="entry name" value="Transp-assoc_OB_typ2"/>
</dbReference>
<dbReference type="NCBIfam" id="TIGR01187">
    <property type="entry name" value="potA"/>
    <property type="match status" value="1"/>
</dbReference>
<dbReference type="NCBIfam" id="NF006987">
    <property type="entry name" value="PRK09452.1"/>
    <property type="match status" value="1"/>
</dbReference>
<dbReference type="PANTHER" id="PTHR42781">
    <property type="entry name" value="SPERMIDINE/PUTRESCINE IMPORT ATP-BINDING PROTEIN POTA"/>
    <property type="match status" value="1"/>
</dbReference>
<dbReference type="PANTHER" id="PTHR42781:SF4">
    <property type="entry name" value="SPERMIDINE_PUTRESCINE IMPORT ATP-BINDING PROTEIN POTA"/>
    <property type="match status" value="1"/>
</dbReference>
<dbReference type="Pfam" id="PF00005">
    <property type="entry name" value="ABC_tran"/>
    <property type="match status" value="1"/>
</dbReference>
<dbReference type="Pfam" id="PF08402">
    <property type="entry name" value="TOBE_2"/>
    <property type="match status" value="1"/>
</dbReference>
<dbReference type="SMART" id="SM00382">
    <property type="entry name" value="AAA"/>
    <property type="match status" value="1"/>
</dbReference>
<dbReference type="SUPFAM" id="SSF50331">
    <property type="entry name" value="MOP-like"/>
    <property type="match status" value="1"/>
</dbReference>
<dbReference type="SUPFAM" id="SSF52540">
    <property type="entry name" value="P-loop containing nucleoside triphosphate hydrolases"/>
    <property type="match status" value="1"/>
</dbReference>
<dbReference type="PROSITE" id="PS00211">
    <property type="entry name" value="ABC_TRANSPORTER_1"/>
    <property type="match status" value="1"/>
</dbReference>
<dbReference type="PROSITE" id="PS50893">
    <property type="entry name" value="ABC_TRANSPORTER_2"/>
    <property type="match status" value="1"/>
</dbReference>
<dbReference type="PROSITE" id="PS51305">
    <property type="entry name" value="POTA"/>
    <property type="match status" value="1"/>
</dbReference>
<name>POTA_SHIBS</name>
<sequence length="378" mass="43042">MGQSKKLNKQPSSLSPLVQLAGIRKCFDGKEVIPQLDLTINNGEFLTLLGPSGCGKTTVLRLIAGLETVDSGRIMLDNEDITHVPAENRYVNTVFQSYALFPHMTVFENVAFGLRMQKTPAAEITPRVMEALRMVQLETFAQRKPHQLSGGQQQRVAIARAVVNKPRLLLLDESLSALDYKLRKQMQNELKALQRKLGITFVFVTHDQEEALTMSDRIVVMREGRIEQDGTPREIYEEPKNLFVAGFIGEINMFNATVIERLDEQRVRANVEGRECNIYVNFAVEPGQKLHVLLRPEDLRVEEINDDNHAEGLIGYVRERNYKGMTLESVVELENGKMVMVSEFFNEDDPDFDHSLDQKMAINWVESWEVVLADEEHK</sequence>
<reference key="1">
    <citation type="journal article" date="2005" name="Nucleic Acids Res.">
        <title>Genome dynamics and diversity of Shigella species, the etiologic agents of bacillary dysentery.</title>
        <authorList>
            <person name="Yang F."/>
            <person name="Yang J."/>
            <person name="Zhang X."/>
            <person name="Chen L."/>
            <person name="Jiang Y."/>
            <person name="Yan Y."/>
            <person name="Tang X."/>
            <person name="Wang J."/>
            <person name="Xiong Z."/>
            <person name="Dong J."/>
            <person name="Xue Y."/>
            <person name="Zhu Y."/>
            <person name="Xu X."/>
            <person name="Sun L."/>
            <person name="Chen S."/>
            <person name="Nie H."/>
            <person name="Peng J."/>
            <person name="Xu J."/>
            <person name="Wang Y."/>
            <person name="Yuan Z."/>
            <person name="Wen Y."/>
            <person name="Yao Z."/>
            <person name="Shen Y."/>
            <person name="Qiang B."/>
            <person name="Hou Y."/>
            <person name="Yu J."/>
            <person name="Jin Q."/>
        </authorList>
    </citation>
    <scope>NUCLEOTIDE SEQUENCE [LARGE SCALE GENOMIC DNA]</scope>
    <source>
        <strain>Sb227</strain>
    </source>
</reference>